<sequence>MFDQLDIVEERYEQLNELLSDPDVVNDSDKLRKYSKEQADLQKTVDVYRNYKAKKEELADIEEMLSETDDKEEVEMLKEESNGIKAELPNLEEELKILLIPKDPNDDKDVIVEIRAAAGGDEAAIFAGDLMRMYSKYAESQGFKTEIVEASESDHGGYKEISFSVSGNGAYSKLKFENGAHRVQRVPETESGGRIHTSTATVAVLPEVEDVEIEIRNEDLKIDTYRSSGAGGQHVNTTDSAVRITHLPTGVIATSSEKSQIQNREKAMKVLKARLYDMKVQEEQQKYASQRKSAVGTGDRSERIRTYNYPQSRVTDHRIGLTLQKLGQIMEGHLEEIIDALTLSEQTDKLKELNNGEL</sequence>
<protein>
    <recommendedName>
        <fullName evidence="1">Peptide chain release factor 1</fullName>
        <shortName evidence="1">RF-1</shortName>
    </recommendedName>
</protein>
<gene>
    <name evidence="1" type="primary">prfA</name>
    <name type="ordered locus">USA300HOU_2106</name>
</gene>
<organism>
    <name type="scientific">Staphylococcus aureus (strain USA300 / TCH1516)</name>
    <dbReference type="NCBI Taxonomy" id="451516"/>
    <lineage>
        <taxon>Bacteria</taxon>
        <taxon>Bacillati</taxon>
        <taxon>Bacillota</taxon>
        <taxon>Bacilli</taxon>
        <taxon>Bacillales</taxon>
        <taxon>Staphylococcaceae</taxon>
        <taxon>Staphylococcus</taxon>
    </lineage>
</organism>
<keyword id="KW-0963">Cytoplasm</keyword>
<keyword id="KW-0488">Methylation</keyword>
<keyword id="KW-0648">Protein biosynthesis</keyword>
<dbReference type="EMBL" id="CP000730">
    <property type="protein sequence ID" value="ABX30103.1"/>
    <property type="molecule type" value="Genomic_DNA"/>
</dbReference>
<dbReference type="RefSeq" id="WP_000460242.1">
    <property type="nucleotide sequence ID" value="NC_010079.1"/>
</dbReference>
<dbReference type="SMR" id="A8YY83"/>
<dbReference type="KEGG" id="sax:USA300HOU_2106"/>
<dbReference type="HOGENOM" id="CLU_036856_0_1_9"/>
<dbReference type="GO" id="GO:0005737">
    <property type="term" value="C:cytoplasm"/>
    <property type="evidence" value="ECO:0007669"/>
    <property type="project" value="UniProtKB-SubCell"/>
</dbReference>
<dbReference type="GO" id="GO:0016149">
    <property type="term" value="F:translation release factor activity, codon specific"/>
    <property type="evidence" value="ECO:0007669"/>
    <property type="project" value="UniProtKB-UniRule"/>
</dbReference>
<dbReference type="FunFam" id="3.30.160.20:FF:000004">
    <property type="entry name" value="Peptide chain release factor 1"/>
    <property type="match status" value="1"/>
</dbReference>
<dbReference type="FunFam" id="3.30.70.1660:FF:000002">
    <property type="entry name" value="Peptide chain release factor 1"/>
    <property type="match status" value="1"/>
</dbReference>
<dbReference type="FunFam" id="3.30.70.1660:FF:000004">
    <property type="entry name" value="Peptide chain release factor 1"/>
    <property type="match status" value="1"/>
</dbReference>
<dbReference type="Gene3D" id="3.30.160.20">
    <property type="match status" value="1"/>
</dbReference>
<dbReference type="Gene3D" id="3.30.70.1660">
    <property type="match status" value="1"/>
</dbReference>
<dbReference type="Gene3D" id="6.10.140.1950">
    <property type="match status" value="1"/>
</dbReference>
<dbReference type="HAMAP" id="MF_00093">
    <property type="entry name" value="Rel_fac_1"/>
    <property type="match status" value="1"/>
</dbReference>
<dbReference type="InterPro" id="IPR005139">
    <property type="entry name" value="PCRF"/>
</dbReference>
<dbReference type="InterPro" id="IPR000352">
    <property type="entry name" value="Pep_chain_release_fac_I"/>
</dbReference>
<dbReference type="InterPro" id="IPR045853">
    <property type="entry name" value="Pep_chain_release_fac_I_sf"/>
</dbReference>
<dbReference type="InterPro" id="IPR050057">
    <property type="entry name" value="Prokaryotic/Mito_RF"/>
</dbReference>
<dbReference type="InterPro" id="IPR004373">
    <property type="entry name" value="RF-1"/>
</dbReference>
<dbReference type="NCBIfam" id="TIGR00019">
    <property type="entry name" value="prfA"/>
    <property type="match status" value="1"/>
</dbReference>
<dbReference type="NCBIfam" id="NF001859">
    <property type="entry name" value="PRK00591.1"/>
    <property type="match status" value="1"/>
</dbReference>
<dbReference type="PANTHER" id="PTHR43804">
    <property type="entry name" value="LD18447P"/>
    <property type="match status" value="1"/>
</dbReference>
<dbReference type="PANTHER" id="PTHR43804:SF7">
    <property type="entry name" value="LD18447P"/>
    <property type="match status" value="1"/>
</dbReference>
<dbReference type="Pfam" id="PF03462">
    <property type="entry name" value="PCRF"/>
    <property type="match status" value="1"/>
</dbReference>
<dbReference type="Pfam" id="PF00472">
    <property type="entry name" value="RF-1"/>
    <property type="match status" value="1"/>
</dbReference>
<dbReference type="SMART" id="SM00937">
    <property type="entry name" value="PCRF"/>
    <property type="match status" value="1"/>
</dbReference>
<dbReference type="SUPFAM" id="SSF75620">
    <property type="entry name" value="Release factor"/>
    <property type="match status" value="1"/>
</dbReference>
<dbReference type="PROSITE" id="PS00745">
    <property type="entry name" value="RF_PROK_I"/>
    <property type="match status" value="1"/>
</dbReference>
<reference key="1">
    <citation type="journal article" date="2007" name="BMC Microbiol.">
        <title>Subtle genetic changes enhance virulence of methicillin resistant and sensitive Staphylococcus aureus.</title>
        <authorList>
            <person name="Highlander S.K."/>
            <person name="Hulten K.G."/>
            <person name="Qin X."/>
            <person name="Jiang H."/>
            <person name="Yerrapragada S."/>
            <person name="Mason E.O. Jr."/>
            <person name="Shang Y."/>
            <person name="Williams T.M."/>
            <person name="Fortunov R.M."/>
            <person name="Liu Y."/>
            <person name="Igboeli O."/>
            <person name="Petrosino J."/>
            <person name="Tirumalai M."/>
            <person name="Uzman A."/>
            <person name="Fox G.E."/>
            <person name="Cardenas A.M."/>
            <person name="Muzny D.M."/>
            <person name="Hemphill L."/>
            <person name="Ding Y."/>
            <person name="Dugan S."/>
            <person name="Blyth P.R."/>
            <person name="Buhay C.J."/>
            <person name="Dinh H.H."/>
            <person name="Hawes A.C."/>
            <person name="Holder M."/>
            <person name="Kovar C.L."/>
            <person name="Lee S.L."/>
            <person name="Liu W."/>
            <person name="Nazareth L.V."/>
            <person name="Wang Q."/>
            <person name="Zhou J."/>
            <person name="Kaplan S.L."/>
            <person name="Weinstock G.M."/>
        </authorList>
    </citation>
    <scope>NUCLEOTIDE SEQUENCE [LARGE SCALE GENOMIC DNA]</scope>
    <source>
        <strain>USA300 / TCH1516</strain>
    </source>
</reference>
<comment type="function">
    <text evidence="1">Peptide chain release factor 1 directs the termination of translation in response to the peptide chain termination codons UAG and UAA.</text>
</comment>
<comment type="subcellular location">
    <subcellularLocation>
        <location evidence="1">Cytoplasm</location>
    </subcellularLocation>
</comment>
<comment type="PTM">
    <text evidence="1">Methylated by PrmC. Methylation increases the termination efficiency of RF1.</text>
</comment>
<comment type="similarity">
    <text evidence="1">Belongs to the prokaryotic/mitochondrial release factor family.</text>
</comment>
<proteinExistence type="inferred from homology"/>
<accession>A8YY83</accession>
<evidence type="ECO:0000255" key="1">
    <source>
        <dbReference type="HAMAP-Rule" id="MF_00093"/>
    </source>
</evidence>
<name>RF1_STAAT</name>
<feature type="chain" id="PRO_1000075520" description="Peptide chain release factor 1">
    <location>
        <begin position="1"/>
        <end position="358"/>
    </location>
</feature>
<feature type="modified residue" description="N5-methylglutamine" evidence="1">
    <location>
        <position position="233"/>
    </location>
</feature>